<comment type="function">
    <text>Protects a microcin H47-producer cell against microcin H47.</text>
</comment>
<comment type="subcellular location">
    <subcellularLocation>
        <location evidence="2">Cell membrane</location>
        <topology evidence="2">Multi-pass membrane protein</topology>
    </subcellularLocation>
</comment>
<organism>
    <name type="scientific">Escherichia coli</name>
    <dbReference type="NCBI Taxonomy" id="562"/>
    <lineage>
        <taxon>Bacteria</taxon>
        <taxon>Pseudomonadati</taxon>
        <taxon>Pseudomonadota</taxon>
        <taxon>Gammaproteobacteria</taxon>
        <taxon>Enterobacterales</taxon>
        <taxon>Enterobacteriaceae</taxon>
        <taxon>Escherichia</taxon>
    </lineage>
</organism>
<feature type="chain" id="PRO_0000096278" description="Microcin H47 immunity protein MchI">
    <location>
        <begin position="1"/>
        <end position="69"/>
    </location>
</feature>
<feature type="topological domain" description="Cytoplasmic" evidence="1">
    <location>
        <begin position="1"/>
        <end position="6"/>
    </location>
</feature>
<feature type="transmembrane region" description="Helical" evidence="1">
    <location>
        <begin position="7"/>
        <end position="29"/>
    </location>
</feature>
<feature type="topological domain" description="Periplasmic" evidence="1">
    <location>
        <begin position="30"/>
        <end position="38"/>
    </location>
</feature>
<feature type="transmembrane region" description="Helical" evidence="1">
    <location>
        <begin position="39"/>
        <end position="61"/>
    </location>
</feature>
<feature type="topological domain" description="Cytoplasmic" evidence="1">
    <location>
        <begin position="62"/>
        <end position="69"/>
    </location>
</feature>
<proteinExistence type="evidence at protein level"/>
<protein>
    <recommendedName>
        <fullName>Microcin H47 immunity protein MchI</fullName>
    </recommendedName>
</protein>
<evidence type="ECO:0000255" key="1"/>
<evidence type="ECO:0000305" key="2"/>
<keyword id="KW-0079">Bacteriocin immunity</keyword>
<keyword id="KW-1003">Cell membrane</keyword>
<keyword id="KW-0472">Membrane</keyword>
<keyword id="KW-0812">Transmembrane</keyword>
<keyword id="KW-1133">Transmembrane helix</keyword>
<dbReference type="EMBL" id="X97613">
    <property type="protein sequence ID" value="CAA66217.1"/>
    <property type="molecule type" value="Genomic_DNA"/>
</dbReference>
<dbReference type="EMBL" id="AJ009631">
    <property type="protein sequence ID" value="CAB54533.1"/>
    <property type="molecule type" value="Genomic_DNA"/>
</dbReference>
<dbReference type="RefSeq" id="WP_000120664.1">
    <property type="nucleotide sequence ID" value="NZ_WSWV01000106.1"/>
</dbReference>
<dbReference type="SMR" id="O86200"/>
<dbReference type="GO" id="GO:0005886">
    <property type="term" value="C:plasma membrane"/>
    <property type="evidence" value="ECO:0007669"/>
    <property type="project" value="UniProtKB-SubCell"/>
</dbReference>
<dbReference type="GO" id="GO:0030153">
    <property type="term" value="P:bacteriocin immunity"/>
    <property type="evidence" value="ECO:0007669"/>
    <property type="project" value="UniProtKB-KW"/>
</dbReference>
<name>MCHI_ECOLX</name>
<reference key="1">
    <citation type="journal article" date="1998" name="Can. J. Microbiol.">
        <title>Genetic analysis of microcin H47 immunity.</title>
        <authorList>
            <person name="Rodriguez E."/>
            <person name="Lavina M."/>
        </authorList>
    </citation>
    <scope>NUCLEOTIDE SEQUENCE [GENOMIC DNA]</scope>
    <scope>CHARACTERIZATION</scope>
    <source>
        <strain>H47</strain>
    </source>
</reference>
<sequence length="69" mass="7807">MSYKKLYQLTAIFSLPLTILLVSLSSLRIVGEGNSYVDVFLSFIIFLGFIELIHGIRKILVWSGWKNGS</sequence>
<gene>
    <name type="primary">mchI</name>
</gene>
<accession>O86200</accession>